<name>SYT_GEOSM</name>
<gene>
    <name evidence="1" type="primary">thrS</name>
    <name type="ordered locus">GM21_2230</name>
</gene>
<sequence length="636" mass="71972">MNEINVTLPDGSQRPLPAGASIFDLAASIGAGLAKAAIAGKIDGNLVDLNTPLADGARVEIVTEKSPEALEIIRHSTSHLMAQAVKALFPQAKVTIGPAIETGFYYDFDVDHPFTPEDLEKIEEKMRELAKADLKIERRELTSADAIALFKGMGEDYKVELIEDLGADKVSLYSQGDFVDLCRGPHLPKTSYIKAFKLTSIAGAYWRGDEKRAMLQRVYGTAFGDKKELEAYLARIEEAKKRDHRKLGRELDLFSFNDEVGAGLVIWHPKGAMLRTILEDFERKEHLKRGYDIVLGPQILKTELWQRSGHYENYRENMYFTTVDEQSYGVKPMNCLAHMMIYRSQLRSYRDLPLRYFELGTVHRHERAGVLHGLLRVRGFTQDDAHILCTPDQLDAEIKGVIQFVTEVMGIFGFEFEMELSTRPEKSIGSDDAWELATSALLNALKDSGRPYEINEGDGAFYGPKIDIKLRDALDRRWQCATIQCDFTLPERFDLTYVDADGEKKRPVMVHRVILGAIERFIGVLIEHFAGNFPTWLAPVQATIVTVTDNQIPYAQAAFDKLRAAGIRVQKDFRNEKLGFKIREAQLQKIPYMLVVGDKEVESGMLAPRFRDGKNLESMTPEQFITFIENEVKSYK</sequence>
<organism>
    <name type="scientific">Geobacter sp. (strain M21)</name>
    <dbReference type="NCBI Taxonomy" id="443144"/>
    <lineage>
        <taxon>Bacteria</taxon>
        <taxon>Pseudomonadati</taxon>
        <taxon>Thermodesulfobacteriota</taxon>
        <taxon>Desulfuromonadia</taxon>
        <taxon>Geobacterales</taxon>
        <taxon>Geobacteraceae</taxon>
        <taxon>Geobacter</taxon>
    </lineage>
</organism>
<accession>C6DYJ5</accession>
<keyword id="KW-0030">Aminoacyl-tRNA synthetase</keyword>
<keyword id="KW-0067">ATP-binding</keyword>
<keyword id="KW-0963">Cytoplasm</keyword>
<keyword id="KW-0436">Ligase</keyword>
<keyword id="KW-0479">Metal-binding</keyword>
<keyword id="KW-0547">Nucleotide-binding</keyword>
<keyword id="KW-0648">Protein biosynthesis</keyword>
<keyword id="KW-0694">RNA-binding</keyword>
<keyword id="KW-0820">tRNA-binding</keyword>
<keyword id="KW-0862">Zinc</keyword>
<comment type="function">
    <text evidence="1">Catalyzes the attachment of threonine to tRNA(Thr) in a two-step reaction: L-threonine is first activated by ATP to form Thr-AMP and then transferred to the acceptor end of tRNA(Thr). Also edits incorrectly charged L-seryl-tRNA(Thr).</text>
</comment>
<comment type="catalytic activity">
    <reaction evidence="1">
        <text>tRNA(Thr) + L-threonine + ATP = L-threonyl-tRNA(Thr) + AMP + diphosphate + H(+)</text>
        <dbReference type="Rhea" id="RHEA:24624"/>
        <dbReference type="Rhea" id="RHEA-COMP:9670"/>
        <dbReference type="Rhea" id="RHEA-COMP:9704"/>
        <dbReference type="ChEBI" id="CHEBI:15378"/>
        <dbReference type="ChEBI" id="CHEBI:30616"/>
        <dbReference type="ChEBI" id="CHEBI:33019"/>
        <dbReference type="ChEBI" id="CHEBI:57926"/>
        <dbReference type="ChEBI" id="CHEBI:78442"/>
        <dbReference type="ChEBI" id="CHEBI:78534"/>
        <dbReference type="ChEBI" id="CHEBI:456215"/>
        <dbReference type="EC" id="6.1.1.3"/>
    </reaction>
</comment>
<comment type="cofactor">
    <cofactor evidence="1">
        <name>Zn(2+)</name>
        <dbReference type="ChEBI" id="CHEBI:29105"/>
    </cofactor>
    <text evidence="1">Binds 1 zinc ion per subunit.</text>
</comment>
<comment type="subunit">
    <text evidence="1">Homodimer.</text>
</comment>
<comment type="subcellular location">
    <subcellularLocation>
        <location evidence="1">Cytoplasm</location>
    </subcellularLocation>
</comment>
<comment type="similarity">
    <text evidence="1">Belongs to the class-II aminoacyl-tRNA synthetase family.</text>
</comment>
<feature type="chain" id="PRO_1000203906" description="Threonine--tRNA ligase">
    <location>
        <begin position="1"/>
        <end position="636"/>
    </location>
</feature>
<feature type="domain" description="TGS" evidence="2">
    <location>
        <begin position="1"/>
        <end position="63"/>
    </location>
</feature>
<feature type="region of interest" description="Catalytic" evidence="1">
    <location>
        <begin position="243"/>
        <end position="534"/>
    </location>
</feature>
<feature type="binding site" evidence="1">
    <location>
        <position position="335"/>
    </location>
    <ligand>
        <name>Zn(2+)</name>
        <dbReference type="ChEBI" id="CHEBI:29105"/>
    </ligand>
</feature>
<feature type="binding site" evidence="1">
    <location>
        <position position="386"/>
    </location>
    <ligand>
        <name>Zn(2+)</name>
        <dbReference type="ChEBI" id="CHEBI:29105"/>
    </ligand>
</feature>
<feature type="binding site" evidence="1">
    <location>
        <position position="511"/>
    </location>
    <ligand>
        <name>Zn(2+)</name>
        <dbReference type="ChEBI" id="CHEBI:29105"/>
    </ligand>
</feature>
<dbReference type="EC" id="6.1.1.3" evidence="1"/>
<dbReference type="EMBL" id="CP001661">
    <property type="protein sequence ID" value="ACT18279.1"/>
    <property type="molecule type" value="Genomic_DNA"/>
</dbReference>
<dbReference type="SMR" id="C6DYJ5"/>
<dbReference type="STRING" id="443144.GM21_2230"/>
<dbReference type="KEGG" id="gem:GM21_2230"/>
<dbReference type="eggNOG" id="COG0441">
    <property type="taxonomic scope" value="Bacteria"/>
</dbReference>
<dbReference type="HOGENOM" id="CLU_008554_0_1_7"/>
<dbReference type="OrthoDB" id="9802304at2"/>
<dbReference type="GO" id="GO:0005829">
    <property type="term" value="C:cytosol"/>
    <property type="evidence" value="ECO:0007669"/>
    <property type="project" value="TreeGrafter"/>
</dbReference>
<dbReference type="GO" id="GO:0005524">
    <property type="term" value="F:ATP binding"/>
    <property type="evidence" value="ECO:0007669"/>
    <property type="project" value="UniProtKB-UniRule"/>
</dbReference>
<dbReference type="GO" id="GO:0046872">
    <property type="term" value="F:metal ion binding"/>
    <property type="evidence" value="ECO:0007669"/>
    <property type="project" value="UniProtKB-KW"/>
</dbReference>
<dbReference type="GO" id="GO:0004829">
    <property type="term" value="F:threonine-tRNA ligase activity"/>
    <property type="evidence" value="ECO:0007669"/>
    <property type="project" value="UniProtKB-UniRule"/>
</dbReference>
<dbReference type="GO" id="GO:0000049">
    <property type="term" value="F:tRNA binding"/>
    <property type="evidence" value="ECO:0007669"/>
    <property type="project" value="UniProtKB-KW"/>
</dbReference>
<dbReference type="GO" id="GO:0006435">
    <property type="term" value="P:threonyl-tRNA aminoacylation"/>
    <property type="evidence" value="ECO:0007669"/>
    <property type="project" value="UniProtKB-UniRule"/>
</dbReference>
<dbReference type="CDD" id="cd01667">
    <property type="entry name" value="TGS_ThrRS"/>
    <property type="match status" value="1"/>
</dbReference>
<dbReference type="CDD" id="cd00860">
    <property type="entry name" value="ThrRS_anticodon"/>
    <property type="match status" value="1"/>
</dbReference>
<dbReference type="CDD" id="cd00771">
    <property type="entry name" value="ThrRS_core"/>
    <property type="match status" value="1"/>
</dbReference>
<dbReference type="FunFam" id="3.10.20.30:FF:000005">
    <property type="entry name" value="Threonine--tRNA ligase"/>
    <property type="match status" value="1"/>
</dbReference>
<dbReference type="FunFam" id="3.30.54.20:FF:000002">
    <property type="entry name" value="Threonine--tRNA ligase"/>
    <property type="match status" value="1"/>
</dbReference>
<dbReference type="FunFam" id="3.30.930.10:FF:000002">
    <property type="entry name" value="Threonine--tRNA ligase"/>
    <property type="match status" value="1"/>
</dbReference>
<dbReference type="FunFam" id="3.40.50.800:FF:000001">
    <property type="entry name" value="Threonine--tRNA ligase"/>
    <property type="match status" value="1"/>
</dbReference>
<dbReference type="FunFam" id="3.30.980.10:FF:000005">
    <property type="entry name" value="Threonyl-tRNA synthetase, mitochondrial"/>
    <property type="match status" value="1"/>
</dbReference>
<dbReference type="Gene3D" id="3.10.20.30">
    <property type="match status" value="1"/>
</dbReference>
<dbReference type="Gene3D" id="3.30.54.20">
    <property type="match status" value="1"/>
</dbReference>
<dbReference type="Gene3D" id="3.40.50.800">
    <property type="entry name" value="Anticodon-binding domain"/>
    <property type="match status" value="1"/>
</dbReference>
<dbReference type="Gene3D" id="3.30.930.10">
    <property type="entry name" value="Bira Bifunctional Protein, Domain 2"/>
    <property type="match status" value="1"/>
</dbReference>
<dbReference type="Gene3D" id="3.30.980.10">
    <property type="entry name" value="Threonyl-trna Synthetase, Chain A, domain 2"/>
    <property type="match status" value="1"/>
</dbReference>
<dbReference type="HAMAP" id="MF_00184">
    <property type="entry name" value="Thr_tRNA_synth"/>
    <property type="match status" value="1"/>
</dbReference>
<dbReference type="InterPro" id="IPR002314">
    <property type="entry name" value="aa-tRNA-synt_IIb"/>
</dbReference>
<dbReference type="InterPro" id="IPR006195">
    <property type="entry name" value="aa-tRNA-synth_II"/>
</dbReference>
<dbReference type="InterPro" id="IPR045864">
    <property type="entry name" value="aa-tRNA-synth_II/BPL/LPL"/>
</dbReference>
<dbReference type="InterPro" id="IPR004154">
    <property type="entry name" value="Anticodon-bd"/>
</dbReference>
<dbReference type="InterPro" id="IPR036621">
    <property type="entry name" value="Anticodon-bd_dom_sf"/>
</dbReference>
<dbReference type="InterPro" id="IPR012675">
    <property type="entry name" value="Beta-grasp_dom_sf"/>
</dbReference>
<dbReference type="InterPro" id="IPR004095">
    <property type="entry name" value="TGS"/>
</dbReference>
<dbReference type="InterPro" id="IPR012676">
    <property type="entry name" value="TGS-like"/>
</dbReference>
<dbReference type="InterPro" id="IPR002320">
    <property type="entry name" value="Thr-tRNA-ligase_IIa"/>
</dbReference>
<dbReference type="InterPro" id="IPR018163">
    <property type="entry name" value="Thr/Ala-tRNA-synth_IIc_edit"/>
</dbReference>
<dbReference type="InterPro" id="IPR047246">
    <property type="entry name" value="ThrRS_anticodon"/>
</dbReference>
<dbReference type="InterPro" id="IPR033728">
    <property type="entry name" value="ThrRS_core"/>
</dbReference>
<dbReference type="InterPro" id="IPR012947">
    <property type="entry name" value="tRNA_SAD"/>
</dbReference>
<dbReference type="NCBIfam" id="TIGR00418">
    <property type="entry name" value="thrS"/>
    <property type="match status" value="1"/>
</dbReference>
<dbReference type="PANTHER" id="PTHR11451:SF44">
    <property type="entry name" value="THREONINE--TRNA LIGASE, CHLOROPLASTIC_MITOCHONDRIAL 2"/>
    <property type="match status" value="1"/>
</dbReference>
<dbReference type="PANTHER" id="PTHR11451">
    <property type="entry name" value="THREONINE-TRNA LIGASE"/>
    <property type="match status" value="1"/>
</dbReference>
<dbReference type="Pfam" id="PF03129">
    <property type="entry name" value="HGTP_anticodon"/>
    <property type="match status" value="1"/>
</dbReference>
<dbReference type="Pfam" id="PF02824">
    <property type="entry name" value="TGS"/>
    <property type="match status" value="1"/>
</dbReference>
<dbReference type="Pfam" id="PF00587">
    <property type="entry name" value="tRNA-synt_2b"/>
    <property type="match status" value="1"/>
</dbReference>
<dbReference type="Pfam" id="PF07973">
    <property type="entry name" value="tRNA_SAD"/>
    <property type="match status" value="1"/>
</dbReference>
<dbReference type="PRINTS" id="PR01047">
    <property type="entry name" value="TRNASYNTHTHR"/>
</dbReference>
<dbReference type="SMART" id="SM00863">
    <property type="entry name" value="tRNA_SAD"/>
    <property type="match status" value="1"/>
</dbReference>
<dbReference type="SUPFAM" id="SSF52954">
    <property type="entry name" value="Class II aaRS ABD-related"/>
    <property type="match status" value="1"/>
</dbReference>
<dbReference type="SUPFAM" id="SSF55681">
    <property type="entry name" value="Class II aaRS and biotin synthetases"/>
    <property type="match status" value="1"/>
</dbReference>
<dbReference type="SUPFAM" id="SSF81271">
    <property type="entry name" value="TGS-like"/>
    <property type="match status" value="1"/>
</dbReference>
<dbReference type="SUPFAM" id="SSF55186">
    <property type="entry name" value="ThrRS/AlaRS common domain"/>
    <property type="match status" value="1"/>
</dbReference>
<dbReference type="PROSITE" id="PS50862">
    <property type="entry name" value="AA_TRNA_LIGASE_II"/>
    <property type="match status" value="1"/>
</dbReference>
<dbReference type="PROSITE" id="PS51880">
    <property type="entry name" value="TGS"/>
    <property type="match status" value="1"/>
</dbReference>
<proteinExistence type="inferred from homology"/>
<evidence type="ECO:0000255" key="1">
    <source>
        <dbReference type="HAMAP-Rule" id="MF_00184"/>
    </source>
</evidence>
<evidence type="ECO:0000255" key="2">
    <source>
        <dbReference type="PROSITE-ProRule" id="PRU01228"/>
    </source>
</evidence>
<protein>
    <recommendedName>
        <fullName evidence="1">Threonine--tRNA ligase</fullName>
        <ecNumber evidence="1">6.1.1.3</ecNumber>
    </recommendedName>
    <alternativeName>
        <fullName evidence="1">Threonyl-tRNA synthetase</fullName>
        <shortName evidence="1">ThrRS</shortName>
    </alternativeName>
</protein>
<reference key="1">
    <citation type="submission" date="2009-07" db="EMBL/GenBank/DDBJ databases">
        <title>Complete sequence of Geobacter sp. M21.</title>
        <authorList>
            <consortium name="US DOE Joint Genome Institute"/>
            <person name="Lucas S."/>
            <person name="Copeland A."/>
            <person name="Lapidus A."/>
            <person name="Glavina del Rio T."/>
            <person name="Dalin E."/>
            <person name="Tice H."/>
            <person name="Bruce D."/>
            <person name="Goodwin L."/>
            <person name="Pitluck S."/>
            <person name="Saunders E."/>
            <person name="Brettin T."/>
            <person name="Detter J.C."/>
            <person name="Han C."/>
            <person name="Larimer F."/>
            <person name="Land M."/>
            <person name="Hauser L."/>
            <person name="Kyrpides N."/>
            <person name="Ovchinnikova G."/>
            <person name="Lovley D."/>
        </authorList>
    </citation>
    <scope>NUCLEOTIDE SEQUENCE [LARGE SCALE GENOMIC DNA]</scope>
    <source>
        <strain>M21</strain>
    </source>
</reference>